<reference key="1">
    <citation type="journal article" date="2002" name="J. Bacteriol.">
        <title>Whole-genome comparison of Mycobacterium tuberculosis clinical and laboratory strains.</title>
        <authorList>
            <person name="Fleischmann R.D."/>
            <person name="Alland D."/>
            <person name="Eisen J.A."/>
            <person name="Carpenter L."/>
            <person name="White O."/>
            <person name="Peterson J.D."/>
            <person name="DeBoy R.T."/>
            <person name="Dodson R.J."/>
            <person name="Gwinn M.L."/>
            <person name="Haft D.H."/>
            <person name="Hickey E.K."/>
            <person name="Kolonay J.F."/>
            <person name="Nelson W.C."/>
            <person name="Umayam L.A."/>
            <person name="Ermolaeva M.D."/>
            <person name="Salzberg S.L."/>
            <person name="Delcher A."/>
            <person name="Utterback T.R."/>
            <person name="Weidman J.F."/>
            <person name="Khouri H.M."/>
            <person name="Gill J."/>
            <person name="Mikula A."/>
            <person name="Bishai W."/>
            <person name="Jacobs W.R. Jr."/>
            <person name="Venter J.C."/>
            <person name="Fraser C.M."/>
        </authorList>
    </citation>
    <scope>NUCLEOTIDE SEQUENCE [LARGE SCALE GENOMIC DNA]</scope>
    <source>
        <strain>CDC 1551 / Oshkosh</strain>
    </source>
</reference>
<keyword id="KW-0134">Cell wall</keyword>
<keyword id="KW-0342">GTP-binding</keyword>
<keyword id="KW-0547">Nucleotide-binding</keyword>
<keyword id="KW-1185">Reference proteome</keyword>
<keyword id="KW-0694">RNA-binding</keyword>
<keyword id="KW-0964">Secreted</keyword>
<dbReference type="EMBL" id="AE000516">
    <property type="protein sequence ID" value="AAK46727.1"/>
    <property type="molecule type" value="Genomic_DNA"/>
</dbReference>
<dbReference type="PIR" id="C70586">
    <property type="entry name" value="C70586"/>
</dbReference>
<dbReference type="RefSeq" id="WP_003412224.1">
    <property type="nucleotide sequence ID" value="NZ_KK341227.1"/>
</dbReference>
<dbReference type="SMR" id="P9WNK8"/>
<dbReference type="GeneID" id="45426351"/>
<dbReference type="KEGG" id="mtc:MT2433"/>
<dbReference type="PATRIC" id="fig|83331.31.peg.2621"/>
<dbReference type="HOGENOM" id="CLU_038009_0_2_11"/>
<dbReference type="Proteomes" id="UP000001020">
    <property type="component" value="Chromosome"/>
</dbReference>
<dbReference type="GO" id="GO:0030313">
    <property type="term" value="C:cell envelope"/>
    <property type="evidence" value="ECO:0007669"/>
    <property type="project" value="UniProtKB-SubCell"/>
</dbReference>
<dbReference type="GO" id="GO:0005829">
    <property type="term" value="C:cytosol"/>
    <property type="evidence" value="ECO:0007669"/>
    <property type="project" value="TreeGrafter"/>
</dbReference>
<dbReference type="GO" id="GO:0005576">
    <property type="term" value="C:extracellular region"/>
    <property type="evidence" value="ECO:0007669"/>
    <property type="project" value="UniProtKB-KW"/>
</dbReference>
<dbReference type="GO" id="GO:0005525">
    <property type="term" value="F:GTP binding"/>
    <property type="evidence" value="ECO:0007669"/>
    <property type="project" value="UniProtKB-UniRule"/>
</dbReference>
<dbReference type="GO" id="GO:0003924">
    <property type="term" value="F:GTPase activity"/>
    <property type="evidence" value="ECO:0007669"/>
    <property type="project" value="UniProtKB-UniRule"/>
</dbReference>
<dbReference type="GO" id="GO:0043024">
    <property type="term" value="F:ribosomal small subunit binding"/>
    <property type="evidence" value="ECO:0007669"/>
    <property type="project" value="TreeGrafter"/>
</dbReference>
<dbReference type="GO" id="GO:0019843">
    <property type="term" value="F:rRNA binding"/>
    <property type="evidence" value="ECO:0007669"/>
    <property type="project" value="TreeGrafter"/>
</dbReference>
<dbReference type="GO" id="GO:0000028">
    <property type="term" value="P:ribosomal small subunit assembly"/>
    <property type="evidence" value="ECO:0007669"/>
    <property type="project" value="TreeGrafter"/>
</dbReference>
<dbReference type="CDD" id="cd04163">
    <property type="entry name" value="Era"/>
    <property type="match status" value="1"/>
</dbReference>
<dbReference type="CDD" id="cd22534">
    <property type="entry name" value="KH-II_Era"/>
    <property type="match status" value="1"/>
</dbReference>
<dbReference type="FunFam" id="3.30.300.20:FF:000003">
    <property type="entry name" value="GTPase Era"/>
    <property type="match status" value="1"/>
</dbReference>
<dbReference type="FunFam" id="3.40.50.300:FF:000094">
    <property type="entry name" value="GTPase Era"/>
    <property type="match status" value="1"/>
</dbReference>
<dbReference type="Gene3D" id="3.30.300.20">
    <property type="match status" value="1"/>
</dbReference>
<dbReference type="Gene3D" id="3.40.50.300">
    <property type="entry name" value="P-loop containing nucleotide triphosphate hydrolases"/>
    <property type="match status" value="1"/>
</dbReference>
<dbReference type="HAMAP" id="MF_00367">
    <property type="entry name" value="GTPase_Era"/>
    <property type="match status" value="1"/>
</dbReference>
<dbReference type="InterPro" id="IPR030388">
    <property type="entry name" value="G_ERA_dom"/>
</dbReference>
<dbReference type="InterPro" id="IPR006073">
    <property type="entry name" value="GTP-bd"/>
</dbReference>
<dbReference type="InterPro" id="IPR005662">
    <property type="entry name" value="GTPase_Era-like"/>
</dbReference>
<dbReference type="InterPro" id="IPR015946">
    <property type="entry name" value="KH_dom-like_a/b"/>
</dbReference>
<dbReference type="InterPro" id="IPR004044">
    <property type="entry name" value="KH_dom_type_2"/>
</dbReference>
<dbReference type="InterPro" id="IPR009019">
    <property type="entry name" value="KH_sf_prok-type"/>
</dbReference>
<dbReference type="InterPro" id="IPR027417">
    <property type="entry name" value="P-loop_NTPase"/>
</dbReference>
<dbReference type="InterPro" id="IPR005225">
    <property type="entry name" value="Small_GTP-bd"/>
</dbReference>
<dbReference type="NCBIfam" id="TIGR00436">
    <property type="entry name" value="era"/>
    <property type="match status" value="1"/>
</dbReference>
<dbReference type="NCBIfam" id="NF000908">
    <property type="entry name" value="PRK00089.1"/>
    <property type="match status" value="1"/>
</dbReference>
<dbReference type="NCBIfam" id="TIGR00231">
    <property type="entry name" value="small_GTP"/>
    <property type="match status" value="1"/>
</dbReference>
<dbReference type="PANTHER" id="PTHR42698">
    <property type="entry name" value="GTPASE ERA"/>
    <property type="match status" value="1"/>
</dbReference>
<dbReference type="PANTHER" id="PTHR42698:SF1">
    <property type="entry name" value="GTPASE ERA, MITOCHONDRIAL"/>
    <property type="match status" value="1"/>
</dbReference>
<dbReference type="Pfam" id="PF07650">
    <property type="entry name" value="KH_2"/>
    <property type="match status" value="1"/>
</dbReference>
<dbReference type="Pfam" id="PF01926">
    <property type="entry name" value="MMR_HSR1"/>
    <property type="match status" value="1"/>
</dbReference>
<dbReference type="PRINTS" id="PR00326">
    <property type="entry name" value="GTP1OBG"/>
</dbReference>
<dbReference type="SUPFAM" id="SSF52540">
    <property type="entry name" value="P-loop containing nucleoside triphosphate hydrolases"/>
    <property type="match status" value="1"/>
</dbReference>
<dbReference type="SUPFAM" id="SSF54814">
    <property type="entry name" value="Prokaryotic type KH domain (KH-domain type II)"/>
    <property type="match status" value="1"/>
</dbReference>
<dbReference type="PROSITE" id="PS51713">
    <property type="entry name" value="G_ERA"/>
    <property type="match status" value="1"/>
</dbReference>
<dbReference type="PROSITE" id="PS50823">
    <property type="entry name" value="KH_TYPE_2"/>
    <property type="match status" value="1"/>
</dbReference>
<protein>
    <recommendedName>
        <fullName evidence="1">GTPase Era</fullName>
    </recommendedName>
</protein>
<sequence length="300" mass="32460">MTEFHSGFVCLVGRPNTGKSTLTNALVGAKVAITSTRPQTTRHAIRGIVHSDDFQIILVDTPGLHRPRTLLGKRLNDLVRETYAAVDVIGLCIPADEAIGPGDRWIVEQLRSTGPANTTLVVIVTKIDKVPKEKVVAQLVAVSELVTNAAEIVPVSAMTGDRVDLLIDVLAAALPAGPAYYPDGELTDEPEEVLMAELIREAALQGVRDELPHSLAVVIDEVSPREGRDDLIDVHAALYVERDSQKGIVIGKGGARLREVGTAARSQIENLLGTKVYLDLRVKVAKNWQRDPKQLGRLGF</sequence>
<organism>
    <name type="scientific">Mycobacterium tuberculosis (strain CDC 1551 / Oshkosh)</name>
    <dbReference type="NCBI Taxonomy" id="83331"/>
    <lineage>
        <taxon>Bacteria</taxon>
        <taxon>Bacillati</taxon>
        <taxon>Actinomycetota</taxon>
        <taxon>Actinomycetes</taxon>
        <taxon>Mycobacteriales</taxon>
        <taxon>Mycobacteriaceae</taxon>
        <taxon>Mycobacterium</taxon>
        <taxon>Mycobacterium tuberculosis complex</taxon>
    </lineage>
</organism>
<name>ERA_MYCTO</name>
<accession>P9WNK8</accession>
<accession>L0TC41</accession>
<accession>O05834</accession>
<accession>P0A562</accession>
<evidence type="ECO:0000255" key="1">
    <source>
        <dbReference type="HAMAP-Rule" id="MF_00367"/>
    </source>
</evidence>
<evidence type="ECO:0000255" key="2">
    <source>
        <dbReference type="PROSITE-ProRule" id="PRU01050"/>
    </source>
</evidence>
<gene>
    <name evidence="1" type="primary">era</name>
    <name type="ordered locus">MT2433</name>
</gene>
<feature type="chain" id="PRO_0000427109" description="GTPase Era">
    <location>
        <begin position="1"/>
        <end position="300"/>
    </location>
</feature>
<feature type="domain" description="Era-type G" evidence="2">
    <location>
        <begin position="5"/>
        <end position="176"/>
    </location>
</feature>
<feature type="domain" description="KH type-2" evidence="1">
    <location>
        <begin position="207"/>
        <end position="286"/>
    </location>
</feature>
<feature type="region of interest" description="G1" evidence="2">
    <location>
        <begin position="13"/>
        <end position="20"/>
    </location>
</feature>
<feature type="region of interest" description="G2" evidence="2">
    <location>
        <begin position="39"/>
        <end position="43"/>
    </location>
</feature>
<feature type="region of interest" description="G3" evidence="2">
    <location>
        <begin position="60"/>
        <end position="63"/>
    </location>
</feature>
<feature type="region of interest" description="G4" evidence="2">
    <location>
        <begin position="125"/>
        <end position="128"/>
    </location>
</feature>
<feature type="region of interest" description="G5" evidence="2">
    <location>
        <begin position="155"/>
        <end position="157"/>
    </location>
</feature>
<feature type="binding site" evidence="1">
    <location>
        <begin position="13"/>
        <end position="20"/>
    </location>
    <ligand>
        <name>GTP</name>
        <dbReference type="ChEBI" id="CHEBI:37565"/>
    </ligand>
</feature>
<feature type="binding site" evidence="1">
    <location>
        <begin position="60"/>
        <end position="64"/>
    </location>
    <ligand>
        <name>GTP</name>
        <dbReference type="ChEBI" id="CHEBI:37565"/>
    </ligand>
</feature>
<feature type="binding site" evidence="1">
    <location>
        <begin position="125"/>
        <end position="128"/>
    </location>
    <ligand>
        <name>GTP</name>
        <dbReference type="ChEBI" id="CHEBI:37565"/>
    </ligand>
</feature>
<comment type="function">
    <text evidence="1">Exhibits GTPase activity. Binds RNA but is probably not involved in ribosome assembly in mycobacteria.</text>
</comment>
<comment type="subunit">
    <text evidence="1">Monomer.</text>
</comment>
<comment type="subcellular location">
    <subcellularLocation>
        <location evidence="1">Cell envelope</location>
    </subcellularLocation>
    <subcellularLocation>
        <location evidence="1">Secreted</location>
        <location evidence="1">Cell wall</location>
    </subcellularLocation>
</comment>
<comment type="similarity">
    <text evidence="1">Belongs to the TRAFAC class TrmE-Era-EngA-EngB-Septin-like GTPase superfamily. Era GTPase family.</text>
</comment>
<proteinExistence type="inferred from homology"/>